<sequence>MDLELEPTLESIVQHDSLKWIFVGGKGGVGKTTTSSSVAVQLALAQPNEQFLLISTDPAHNLSDAFCQKFGKDARKVEGLPNLSCMEIDPEAAMSDLQQQASQYNNDPNDPLKSMMSDMTGSIPGIDEALSFMEVLKHIKNQKVLEGEDNSNAISYKTIIFDTAPTGHTLRFLQLPSTLEKLLSKFKDLSGKLGPMLSMMGGGQQQDIFEKLNEVQKNVSEVNEQFTNPELTTFICVCISEFLSLYETERMIQELMSYNMDVNSIVVNQLLFAEGDDHSCKRCESRWKMQKKYLDQMGELYEDYHLVKMPLLGCEIRGVENLKKFSKFLLKPYDPKADSDIVFDLEEK</sequence>
<accession>Q6BSM0</accession>
<name>GET3_DEBHA</name>
<keyword id="KW-0002">3D-structure</keyword>
<keyword id="KW-0067">ATP-binding</keyword>
<keyword id="KW-0963">Cytoplasm</keyword>
<keyword id="KW-0256">Endoplasmic reticulum</keyword>
<keyword id="KW-0333">Golgi apparatus</keyword>
<keyword id="KW-0378">Hydrolase</keyword>
<keyword id="KW-0479">Metal-binding</keyword>
<keyword id="KW-0547">Nucleotide-binding</keyword>
<keyword id="KW-1185">Reference proteome</keyword>
<keyword id="KW-0813">Transport</keyword>
<keyword id="KW-0862">Zinc</keyword>
<feature type="chain" id="PRO_0000388206" description="ATPase GET3">
    <location>
        <begin position="1"/>
        <end position="348"/>
    </location>
</feature>
<feature type="active site" evidence="1">
    <location>
        <position position="57"/>
    </location>
</feature>
<feature type="binding site">
    <location>
        <begin position="26"/>
        <end position="33"/>
    </location>
    <ligand>
        <name>ATP</name>
        <dbReference type="ChEBI" id="CHEBI:30616"/>
    </ligand>
</feature>
<feature type="binding site" evidence="1">
    <location>
        <position position="241"/>
    </location>
    <ligand>
        <name>ATP</name>
        <dbReference type="ChEBI" id="CHEBI:30616"/>
    </ligand>
</feature>
<feature type="binding site">
    <location>
        <position position="268"/>
    </location>
    <ligand>
        <name>ATP</name>
        <dbReference type="ChEBI" id="CHEBI:30616"/>
    </ligand>
</feature>
<feature type="binding site" evidence="1">
    <location>
        <position position="280"/>
    </location>
    <ligand>
        <name>Zn(2+)</name>
        <dbReference type="ChEBI" id="CHEBI:29105"/>
        <note>ligand shared between dimeric partners</note>
    </ligand>
</feature>
<feature type="binding site" evidence="1">
    <location>
        <position position="283"/>
    </location>
    <ligand>
        <name>Zn(2+)</name>
        <dbReference type="ChEBI" id="CHEBI:29105"/>
        <note>ligand shared between dimeric partners</note>
    </ligand>
</feature>
<feature type="binding site">
    <location>
        <begin position="310"/>
        <end position="312"/>
    </location>
    <ligand>
        <name>ATP</name>
        <dbReference type="ChEBI" id="CHEBI:30616"/>
    </ligand>
</feature>
<feature type="strand" evidence="2">
    <location>
        <begin position="7"/>
        <end position="9"/>
    </location>
</feature>
<feature type="helix" evidence="2">
    <location>
        <begin position="10"/>
        <end position="13"/>
    </location>
</feature>
<feature type="strand" evidence="2">
    <location>
        <begin position="19"/>
        <end position="24"/>
    </location>
</feature>
<feature type="helix" evidence="2">
    <location>
        <begin position="31"/>
        <end position="45"/>
    </location>
</feature>
<feature type="strand" evidence="2">
    <location>
        <begin position="51"/>
        <end position="55"/>
    </location>
</feature>
<feature type="helix" evidence="2">
    <location>
        <begin position="61"/>
        <end position="66"/>
    </location>
</feature>
<feature type="strand" evidence="2">
    <location>
        <begin position="75"/>
        <end position="77"/>
    </location>
</feature>
<feature type="strand" evidence="2">
    <location>
        <begin position="80"/>
        <end position="87"/>
    </location>
</feature>
<feature type="strand" evidence="2">
    <location>
        <begin position="158"/>
        <end position="162"/>
    </location>
</feature>
<feature type="helix" evidence="2">
    <location>
        <begin position="166"/>
        <end position="172"/>
    </location>
</feature>
<feature type="helix" evidence="2">
    <location>
        <begin position="221"/>
        <end position="226"/>
    </location>
</feature>
<feature type="turn" evidence="2">
    <location>
        <begin position="229"/>
        <end position="231"/>
    </location>
</feature>
<feature type="strand" evidence="2">
    <location>
        <begin position="232"/>
        <end position="241"/>
    </location>
</feature>
<feature type="helix" evidence="2">
    <location>
        <begin position="242"/>
        <end position="257"/>
    </location>
</feature>
<feature type="strand" evidence="2">
    <location>
        <begin position="264"/>
        <end position="270"/>
    </location>
</feature>
<feature type="helix" evidence="2">
    <location>
        <begin position="281"/>
        <end position="300"/>
    </location>
</feature>
<feature type="turn" evidence="2">
    <location>
        <begin position="301"/>
        <end position="303"/>
    </location>
</feature>
<feature type="strand" evidence="2">
    <location>
        <begin position="304"/>
        <end position="310"/>
    </location>
</feature>
<feature type="helix" evidence="2">
    <location>
        <begin position="319"/>
        <end position="330"/>
    </location>
</feature>
<feature type="turn" evidence="2">
    <location>
        <begin position="335"/>
        <end position="337"/>
    </location>
</feature>
<feature type="helix" evidence="2">
    <location>
        <begin position="339"/>
        <end position="343"/>
    </location>
</feature>
<protein>
    <recommendedName>
        <fullName evidence="1">ATPase GET3</fullName>
        <ecNumber evidence="1">3.6.-.-</ecNumber>
    </recommendedName>
    <alternativeName>
        <fullName evidence="1">Arsenical pump-driving ATPase</fullName>
    </alternativeName>
    <alternativeName>
        <fullName evidence="1">Arsenite-stimulated ATPase</fullName>
    </alternativeName>
    <alternativeName>
        <fullName evidence="1">Golgi to ER traffic protein 3</fullName>
    </alternativeName>
    <alternativeName>
        <fullName evidence="1">Guided entry of tail-anchored proteins 3</fullName>
    </alternativeName>
</protein>
<reference key="1">
    <citation type="journal article" date="2004" name="Nature">
        <title>Genome evolution in yeasts.</title>
        <authorList>
            <person name="Dujon B."/>
            <person name="Sherman D."/>
            <person name="Fischer G."/>
            <person name="Durrens P."/>
            <person name="Casaregola S."/>
            <person name="Lafontaine I."/>
            <person name="de Montigny J."/>
            <person name="Marck C."/>
            <person name="Neuveglise C."/>
            <person name="Talla E."/>
            <person name="Goffard N."/>
            <person name="Frangeul L."/>
            <person name="Aigle M."/>
            <person name="Anthouard V."/>
            <person name="Babour A."/>
            <person name="Barbe V."/>
            <person name="Barnay S."/>
            <person name="Blanchin S."/>
            <person name="Beckerich J.-M."/>
            <person name="Beyne E."/>
            <person name="Bleykasten C."/>
            <person name="Boisrame A."/>
            <person name="Boyer J."/>
            <person name="Cattolico L."/>
            <person name="Confanioleri F."/>
            <person name="de Daruvar A."/>
            <person name="Despons L."/>
            <person name="Fabre E."/>
            <person name="Fairhead C."/>
            <person name="Ferry-Dumazet H."/>
            <person name="Groppi A."/>
            <person name="Hantraye F."/>
            <person name="Hennequin C."/>
            <person name="Jauniaux N."/>
            <person name="Joyet P."/>
            <person name="Kachouri R."/>
            <person name="Kerrest A."/>
            <person name="Koszul R."/>
            <person name="Lemaire M."/>
            <person name="Lesur I."/>
            <person name="Ma L."/>
            <person name="Muller H."/>
            <person name="Nicaud J.-M."/>
            <person name="Nikolski M."/>
            <person name="Oztas S."/>
            <person name="Ozier-Kalogeropoulos O."/>
            <person name="Pellenz S."/>
            <person name="Potier S."/>
            <person name="Richard G.-F."/>
            <person name="Straub M.-L."/>
            <person name="Suleau A."/>
            <person name="Swennen D."/>
            <person name="Tekaia F."/>
            <person name="Wesolowski-Louvel M."/>
            <person name="Westhof E."/>
            <person name="Wirth B."/>
            <person name="Zeniou-Meyer M."/>
            <person name="Zivanovic Y."/>
            <person name="Bolotin-Fukuhara M."/>
            <person name="Thierry A."/>
            <person name="Bouchier C."/>
            <person name="Caudron B."/>
            <person name="Scarpelli C."/>
            <person name="Gaillardin C."/>
            <person name="Weissenbach J."/>
            <person name="Wincker P."/>
            <person name="Souciet J.-L."/>
        </authorList>
    </citation>
    <scope>NUCLEOTIDE SEQUENCE [LARGE SCALE GENOMIC DNA]</scope>
    <source>
        <strain>ATCC 36239 / CBS 767 / BCRC 21394 / JCM 1990 / NBRC 0083 / IGC 2968</strain>
    </source>
</reference>
<reference key="2">
    <citation type="journal article" date="2009" name="PLoS ONE">
        <title>The crystal structures of yeast Get3 suggest a mechanism for tail-anchored protein membrane insertion.</title>
        <authorList>
            <person name="Hu J."/>
            <person name="Li J."/>
            <person name="Qian X."/>
            <person name="Denic V."/>
            <person name="Sha B."/>
        </authorList>
    </citation>
    <scope>X-RAY CRYSTALLOGRAPHY (1.8 ANGSTROMS) IN COMPLEX WITH ADP</scope>
</reference>
<proteinExistence type="evidence at protein level"/>
<comment type="function">
    <text evidence="1">ATPase required for the post-translational delivery of tail-anchored (TA) proteins to the endoplasmic reticulum. Recognizes and selectively binds the transmembrane domain of TA proteins in the cytosol. This complex then targets to the endoplasmic reticulum by membrane-bound receptors GET1 and GET2, where the tail-anchored protein is released for insertion. This process is regulated by ATP binding and hydrolysis. ATP binding drives the homodimer towards the closed dimer state, facilitating recognition of newly synthesized TA membrane proteins. ATP hydrolysis is required for insertion. Subsequently, the homodimer reverts towards the open dimer state, lowering its affinity for the GET1-GET2 receptor, and returning it to the cytosol to initiate a new round of targeting. Cooperates with the HDEL receptor ERD2 to mediate the ATP-dependent retrieval of resident ER proteins that contain a C-terminal H-D-E-L retention signal from the Golgi to the ER. Involved in low-level resistance to the oxyanions arsenite and arsenate, and in heat tolerance.</text>
</comment>
<comment type="subunit">
    <text evidence="1">Homodimer. Component of the Golgi to ER traffic (GET) complex, which is composed of GET1, GET2 and GET3. Within the complex, GET1 and GET2 form a heterotetramer which is stabilized by phosphatidylinositol binding and which binds to the GET3 homodimer. Interacts with the chloride channel protein GEF1.</text>
</comment>
<comment type="subcellular location">
    <subcellularLocation>
        <location evidence="1">Cytoplasm</location>
    </subcellularLocation>
    <subcellularLocation>
        <location evidence="1">Endoplasmic reticulum</location>
    </subcellularLocation>
    <subcellularLocation>
        <location evidence="1">Golgi apparatus</location>
    </subcellularLocation>
    <text evidence="1">GET1 and GET2 are required for targeting GET3 to the endoplasmic reticulum.</text>
</comment>
<comment type="similarity">
    <text evidence="1">Belongs to the arsA ATPase family.</text>
</comment>
<evidence type="ECO:0000255" key="1">
    <source>
        <dbReference type="HAMAP-Rule" id="MF_03112"/>
    </source>
</evidence>
<evidence type="ECO:0007829" key="2">
    <source>
        <dbReference type="PDB" id="3IO3"/>
    </source>
</evidence>
<organism>
    <name type="scientific">Debaryomyces hansenii (strain ATCC 36239 / CBS 767 / BCRC 21394 / JCM 1990 / NBRC 0083 / IGC 2968)</name>
    <name type="common">Yeast</name>
    <name type="synonym">Torulaspora hansenii</name>
    <dbReference type="NCBI Taxonomy" id="284592"/>
    <lineage>
        <taxon>Eukaryota</taxon>
        <taxon>Fungi</taxon>
        <taxon>Dikarya</taxon>
        <taxon>Ascomycota</taxon>
        <taxon>Saccharomycotina</taxon>
        <taxon>Pichiomycetes</taxon>
        <taxon>Debaryomycetaceae</taxon>
        <taxon>Debaryomyces</taxon>
    </lineage>
</organism>
<dbReference type="EC" id="3.6.-.-" evidence="1"/>
<dbReference type="EMBL" id="CR382136">
    <property type="protein sequence ID" value="CAG86944.1"/>
    <property type="molecule type" value="Genomic_DNA"/>
</dbReference>
<dbReference type="RefSeq" id="XP_458800.1">
    <property type="nucleotide sequence ID" value="XM_458800.1"/>
</dbReference>
<dbReference type="PDB" id="3IO3">
    <property type="method" value="X-ray"/>
    <property type="resolution" value="1.80 A"/>
    <property type="chains" value="A=1-348"/>
</dbReference>
<dbReference type="PDBsum" id="3IO3"/>
<dbReference type="SMR" id="Q6BSM0"/>
<dbReference type="FunCoup" id="Q6BSM0">
    <property type="interactions" value="1027"/>
</dbReference>
<dbReference type="STRING" id="284592.Q6BSM0"/>
<dbReference type="GeneID" id="2900983"/>
<dbReference type="KEGG" id="dha:DEHA2D07832g"/>
<dbReference type="VEuPathDB" id="FungiDB:DEHA2D07832g"/>
<dbReference type="eggNOG" id="KOG2825">
    <property type="taxonomic scope" value="Eukaryota"/>
</dbReference>
<dbReference type="HOGENOM" id="CLU_040761_0_0_1"/>
<dbReference type="InParanoid" id="Q6BSM0"/>
<dbReference type="OMA" id="MDAPYEF"/>
<dbReference type="OrthoDB" id="1770at2759"/>
<dbReference type="EvolutionaryTrace" id="Q6BSM0"/>
<dbReference type="Proteomes" id="UP000000599">
    <property type="component" value="Chromosome D"/>
</dbReference>
<dbReference type="GO" id="GO:0043529">
    <property type="term" value="C:GET complex"/>
    <property type="evidence" value="ECO:0007669"/>
    <property type="project" value="TreeGrafter"/>
</dbReference>
<dbReference type="GO" id="GO:0005794">
    <property type="term" value="C:Golgi apparatus"/>
    <property type="evidence" value="ECO:0007669"/>
    <property type="project" value="UniProtKB-SubCell"/>
</dbReference>
<dbReference type="GO" id="GO:0005524">
    <property type="term" value="F:ATP binding"/>
    <property type="evidence" value="ECO:0007669"/>
    <property type="project" value="UniProtKB-UniRule"/>
</dbReference>
<dbReference type="GO" id="GO:0016887">
    <property type="term" value="F:ATP hydrolysis activity"/>
    <property type="evidence" value="ECO:0007669"/>
    <property type="project" value="InterPro"/>
</dbReference>
<dbReference type="GO" id="GO:0046872">
    <property type="term" value="F:metal ion binding"/>
    <property type="evidence" value="ECO:0007669"/>
    <property type="project" value="UniProtKB-KW"/>
</dbReference>
<dbReference type="GO" id="GO:0071816">
    <property type="term" value="P:tail-anchored membrane protein insertion into ER membrane"/>
    <property type="evidence" value="ECO:0007669"/>
    <property type="project" value="TreeGrafter"/>
</dbReference>
<dbReference type="CDD" id="cd02035">
    <property type="entry name" value="ArsA"/>
    <property type="match status" value="1"/>
</dbReference>
<dbReference type="FunFam" id="3.40.50.300:FF:001359">
    <property type="entry name" value="ATPase GET3"/>
    <property type="match status" value="1"/>
</dbReference>
<dbReference type="Gene3D" id="3.40.50.300">
    <property type="entry name" value="P-loop containing nucleotide triphosphate hydrolases"/>
    <property type="match status" value="1"/>
</dbReference>
<dbReference type="HAMAP" id="MF_03112">
    <property type="entry name" value="Asna1_Get3"/>
    <property type="match status" value="1"/>
</dbReference>
<dbReference type="InterPro" id="IPR025723">
    <property type="entry name" value="Anion-transp_ATPase-like_dom"/>
</dbReference>
<dbReference type="InterPro" id="IPR016300">
    <property type="entry name" value="ATPase_ArsA/GET3"/>
</dbReference>
<dbReference type="InterPro" id="IPR027542">
    <property type="entry name" value="ATPase_ArsA/GET3_euk"/>
</dbReference>
<dbReference type="InterPro" id="IPR027417">
    <property type="entry name" value="P-loop_NTPase"/>
</dbReference>
<dbReference type="NCBIfam" id="TIGR00345">
    <property type="entry name" value="GET3_arsA_TRC40"/>
    <property type="match status" value="1"/>
</dbReference>
<dbReference type="PANTHER" id="PTHR10803">
    <property type="entry name" value="ARSENICAL PUMP-DRIVING ATPASE ARSENITE-TRANSLOCATING ATPASE"/>
    <property type="match status" value="1"/>
</dbReference>
<dbReference type="PANTHER" id="PTHR10803:SF3">
    <property type="entry name" value="ATPASE GET3"/>
    <property type="match status" value="1"/>
</dbReference>
<dbReference type="Pfam" id="PF02374">
    <property type="entry name" value="ArsA_ATPase"/>
    <property type="match status" value="1"/>
</dbReference>
<dbReference type="SUPFAM" id="SSF52540">
    <property type="entry name" value="P-loop containing nucleoside triphosphate hydrolases"/>
    <property type="match status" value="1"/>
</dbReference>
<gene>
    <name evidence="1" type="primary">GET3</name>
    <name type="ordered locus">DEHA2D07832g</name>
</gene>